<name>PCKA_SULDN</name>
<organism>
    <name type="scientific">Sulfurimonas denitrificans (strain ATCC 33889 / DSM 1251)</name>
    <name type="common">Thiomicrospira denitrificans (strain ATCC 33889 / DSM 1251)</name>
    <dbReference type="NCBI Taxonomy" id="326298"/>
    <lineage>
        <taxon>Bacteria</taxon>
        <taxon>Pseudomonadati</taxon>
        <taxon>Campylobacterota</taxon>
        <taxon>Epsilonproteobacteria</taxon>
        <taxon>Campylobacterales</taxon>
        <taxon>Sulfurimonadaceae</taxon>
        <taxon>Sulfurimonas</taxon>
    </lineage>
</organism>
<dbReference type="EC" id="4.1.1.49" evidence="1"/>
<dbReference type="EMBL" id="CP000153">
    <property type="protein sequence ID" value="ABB44973.1"/>
    <property type="molecule type" value="Genomic_DNA"/>
</dbReference>
<dbReference type="RefSeq" id="WP_011373314.1">
    <property type="nucleotide sequence ID" value="NC_007575.1"/>
</dbReference>
<dbReference type="SMR" id="Q30PV8"/>
<dbReference type="STRING" id="326298.Suden_1696"/>
<dbReference type="KEGG" id="tdn:Suden_1696"/>
<dbReference type="eggNOG" id="COG1866">
    <property type="taxonomic scope" value="Bacteria"/>
</dbReference>
<dbReference type="HOGENOM" id="CLU_018247_0_1_7"/>
<dbReference type="OrthoDB" id="9806325at2"/>
<dbReference type="UniPathway" id="UPA00138"/>
<dbReference type="Proteomes" id="UP000002714">
    <property type="component" value="Chromosome"/>
</dbReference>
<dbReference type="GO" id="GO:0005829">
    <property type="term" value="C:cytosol"/>
    <property type="evidence" value="ECO:0007669"/>
    <property type="project" value="TreeGrafter"/>
</dbReference>
<dbReference type="GO" id="GO:0005524">
    <property type="term" value="F:ATP binding"/>
    <property type="evidence" value="ECO:0007669"/>
    <property type="project" value="UniProtKB-UniRule"/>
</dbReference>
<dbReference type="GO" id="GO:0046872">
    <property type="term" value="F:metal ion binding"/>
    <property type="evidence" value="ECO:0007669"/>
    <property type="project" value="UniProtKB-KW"/>
</dbReference>
<dbReference type="GO" id="GO:0004612">
    <property type="term" value="F:phosphoenolpyruvate carboxykinase (ATP) activity"/>
    <property type="evidence" value="ECO:0007669"/>
    <property type="project" value="UniProtKB-UniRule"/>
</dbReference>
<dbReference type="GO" id="GO:0006094">
    <property type="term" value="P:gluconeogenesis"/>
    <property type="evidence" value="ECO:0007669"/>
    <property type="project" value="UniProtKB-UniRule"/>
</dbReference>
<dbReference type="CDD" id="cd00484">
    <property type="entry name" value="PEPCK_ATP"/>
    <property type="match status" value="1"/>
</dbReference>
<dbReference type="FunFam" id="2.170.8.10:FF:000001">
    <property type="entry name" value="Phosphoenolpyruvate carboxykinase (ATP)"/>
    <property type="match status" value="1"/>
</dbReference>
<dbReference type="FunFam" id="3.40.449.10:FF:000001">
    <property type="entry name" value="Phosphoenolpyruvate carboxykinase (ATP)"/>
    <property type="match status" value="1"/>
</dbReference>
<dbReference type="Gene3D" id="3.90.228.20">
    <property type="match status" value="1"/>
</dbReference>
<dbReference type="Gene3D" id="3.40.449.10">
    <property type="entry name" value="Phosphoenolpyruvate Carboxykinase, domain 1"/>
    <property type="match status" value="1"/>
</dbReference>
<dbReference type="Gene3D" id="2.170.8.10">
    <property type="entry name" value="Phosphoenolpyruvate Carboxykinase, domain 2"/>
    <property type="match status" value="1"/>
</dbReference>
<dbReference type="HAMAP" id="MF_00453">
    <property type="entry name" value="PEPCK_ATP"/>
    <property type="match status" value="1"/>
</dbReference>
<dbReference type="InterPro" id="IPR001272">
    <property type="entry name" value="PEP_carboxykinase_ATP"/>
</dbReference>
<dbReference type="InterPro" id="IPR013035">
    <property type="entry name" value="PEP_carboxykinase_C"/>
</dbReference>
<dbReference type="InterPro" id="IPR008210">
    <property type="entry name" value="PEP_carboxykinase_N"/>
</dbReference>
<dbReference type="InterPro" id="IPR015994">
    <property type="entry name" value="PEPCK_ATP_CS"/>
</dbReference>
<dbReference type="NCBIfam" id="TIGR00224">
    <property type="entry name" value="pckA"/>
    <property type="match status" value="1"/>
</dbReference>
<dbReference type="NCBIfam" id="NF006819">
    <property type="entry name" value="PRK09344.1-1"/>
    <property type="match status" value="1"/>
</dbReference>
<dbReference type="NCBIfam" id="NF006820">
    <property type="entry name" value="PRK09344.1-2"/>
    <property type="match status" value="1"/>
</dbReference>
<dbReference type="NCBIfam" id="NF006821">
    <property type="entry name" value="PRK09344.1-3"/>
    <property type="match status" value="1"/>
</dbReference>
<dbReference type="PANTHER" id="PTHR30031:SF0">
    <property type="entry name" value="PHOSPHOENOLPYRUVATE CARBOXYKINASE (ATP)"/>
    <property type="match status" value="1"/>
</dbReference>
<dbReference type="PANTHER" id="PTHR30031">
    <property type="entry name" value="PHOSPHOENOLPYRUVATE CARBOXYKINASE ATP"/>
    <property type="match status" value="1"/>
</dbReference>
<dbReference type="Pfam" id="PF01293">
    <property type="entry name" value="PEPCK_ATP"/>
    <property type="match status" value="1"/>
</dbReference>
<dbReference type="PIRSF" id="PIRSF006294">
    <property type="entry name" value="PEP_crbxkin"/>
    <property type="match status" value="1"/>
</dbReference>
<dbReference type="SUPFAM" id="SSF68923">
    <property type="entry name" value="PEP carboxykinase N-terminal domain"/>
    <property type="match status" value="1"/>
</dbReference>
<dbReference type="SUPFAM" id="SSF53795">
    <property type="entry name" value="PEP carboxykinase-like"/>
    <property type="match status" value="1"/>
</dbReference>
<dbReference type="PROSITE" id="PS00532">
    <property type="entry name" value="PEPCK_ATP"/>
    <property type="match status" value="1"/>
</dbReference>
<proteinExistence type="inferred from homology"/>
<keyword id="KW-0067">ATP-binding</keyword>
<keyword id="KW-0963">Cytoplasm</keyword>
<keyword id="KW-0210">Decarboxylase</keyword>
<keyword id="KW-0312">Gluconeogenesis</keyword>
<keyword id="KW-0456">Lyase</keyword>
<keyword id="KW-0464">Manganese</keyword>
<keyword id="KW-0479">Metal-binding</keyword>
<keyword id="KW-0547">Nucleotide-binding</keyword>
<keyword id="KW-1185">Reference proteome</keyword>
<sequence>MNLTELEEIGLKNVGKVYHNLGYDELIKHEIENKECILTTSGATAVDTGVFTGRSPKDKYIVDRDPSNRYIAWGDVNQKVSEEIFKELLEVAREQLSAKDLYVTDVYSGASVDSKHSIRFVTEIAWQAHFVKNMFIRPTELELKEFKPQFTVLNACKAVNDKWREHGLNSEVFVLFDIENNLSVIGGTWYGGELKKGIFSMMNYWLPLQNKLSMHCSANVGEKGDTALFFGLSGTGKTTLSTDPYRRLIGDDEHGWDDNGVFNFEGGCYAKVINLDGNNEPEIFNAIKSGALLENVVVNDKGEVDYNDGSKTENTRVSYPIEHIKNHETSLSAGHPENIIFLSADAFGILPPVSKLTREQAMYYFLSGYTAKVAGTERGITKPVATFSSCFGEAFLPLHPTVYAKLLGEKIDKHDVHVYLVNTGWTGGAYGVGTRMSIKDTRACINAILDGSIKESEFDTTKTFKLQVPKTLGNINPEILNPRNAWSDKEAFDKTTDMLANMFNENFKKYQVENSEFDYSEAGPKIES</sequence>
<reference key="1">
    <citation type="journal article" date="2008" name="Appl. Environ. Microbiol.">
        <title>Genome of the epsilonproteobacterial chemolithoautotroph Sulfurimonas denitrificans.</title>
        <authorList>
            <person name="Sievert S.M."/>
            <person name="Scott K.M."/>
            <person name="Klotz M.G."/>
            <person name="Chain P.S.G."/>
            <person name="Hauser L.J."/>
            <person name="Hemp J."/>
            <person name="Huegler M."/>
            <person name="Land M."/>
            <person name="Lapidus A."/>
            <person name="Larimer F.W."/>
            <person name="Lucas S."/>
            <person name="Malfatti S.A."/>
            <person name="Meyer F."/>
            <person name="Paulsen I.T."/>
            <person name="Ren Q."/>
            <person name="Simon J."/>
            <person name="Bailey K."/>
            <person name="Diaz E."/>
            <person name="Fitzpatrick K.A."/>
            <person name="Glover B."/>
            <person name="Gwatney N."/>
            <person name="Korajkic A."/>
            <person name="Long A."/>
            <person name="Mobberley J.M."/>
            <person name="Pantry S.N."/>
            <person name="Pazder G."/>
            <person name="Peterson S."/>
            <person name="Quintanilla J.D."/>
            <person name="Sprinkle R."/>
            <person name="Stephens J."/>
            <person name="Thomas P."/>
            <person name="Vaughn R."/>
            <person name="Weber M.J."/>
            <person name="Wooten L.L."/>
        </authorList>
    </citation>
    <scope>NUCLEOTIDE SEQUENCE [LARGE SCALE GENOMIC DNA]</scope>
    <source>
        <strain>ATCC 33889 / DSM 1251</strain>
    </source>
</reference>
<accession>Q30PV8</accession>
<protein>
    <recommendedName>
        <fullName evidence="1">Phosphoenolpyruvate carboxykinase (ATP)</fullName>
        <shortName evidence="1">PCK</shortName>
        <shortName evidence="1">PEP carboxykinase</shortName>
        <shortName evidence="1">PEPCK</shortName>
        <ecNumber evidence="1">4.1.1.49</ecNumber>
    </recommendedName>
</protein>
<comment type="function">
    <text evidence="1">Involved in the gluconeogenesis. Catalyzes the conversion of oxaloacetate (OAA) to phosphoenolpyruvate (PEP) through direct phosphoryl transfer between the nucleoside triphosphate and OAA.</text>
</comment>
<comment type="catalytic activity">
    <reaction evidence="1">
        <text>oxaloacetate + ATP = phosphoenolpyruvate + ADP + CO2</text>
        <dbReference type="Rhea" id="RHEA:18617"/>
        <dbReference type="ChEBI" id="CHEBI:16452"/>
        <dbReference type="ChEBI" id="CHEBI:16526"/>
        <dbReference type="ChEBI" id="CHEBI:30616"/>
        <dbReference type="ChEBI" id="CHEBI:58702"/>
        <dbReference type="ChEBI" id="CHEBI:456216"/>
        <dbReference type="EC" id="4.1.1.49"/>
    </reaction>
</comment>
<comment type="cofactor">
    <cofactor evidence="1">
        <name>Mn(2+)</name>
        <dbReference type="ChEBI" id="CHEBI:29035"/>
    </cofactor>
    <text evidence="1">Binds 1 Mn(2+) ion per subunit.</text>
</comment>
<comment type="pathway">
    <text evidence="1">Carbohydrate biosynthesis; gluconeogenesis.</text>
</comment>
<comment type="subcellular location">
    <subcellularLocation>
        <location evidence="1">Cytoplasm</location>
    </subcellularLocation>
</comment>
<comment type="similarity">
    <text evidence="1">Belongs to the phosphoenolpyruvate carboxykinase (ATP) family.</text>
</comment>
<feature type="chain" id="PRO_0000236953" description="Phosphoenolpyruvate carboxykinase (ATP)">
    <location>
        <begin position="1"/>
        <end position="528"/>
    </location>
</feature>
<feature type="binding site" evidence="1">
    <location>
        <position position="54"/>
    </location>
    <ligand>
        <name>substrate</name>
    </ligand>
</feature>
<feature type="binding site" evidence="1">
    <location>
        <position position="190"/>
    </location>
    <ligand>
        <name>substrate</name>
    </ligand>
</feature>
<feature type="binding site" evidence="1">
    <location>
        <position position="196"/>
    </location>
    <ligand>
        <name>ATP</name>
        <dbReference type="ChEBI" id="CHEBI:30616"/>
    </ligand>
</feature>
<feature type="binding site" evidence="1">
    <location>
        <position position="196"/>
    </location>
    <ligand>
        <name>Mn(2+)</name>
        <dbReference type="ChEBI" id="CHEBI:29035"/>
    </ligand>
</feature>
<feature type="binding site" evidence="1">
    <location>
        <position position="196"/>
    </location>
    <ligand>
        <name>substrate</name>
    </ligand>
</feature>
<feature type="binding site" evidence="1">
    <location>
        <position position="215"/>
    </location>
    <ligand>
        <name>ATP</name>
        <dbReference type="ChEBI" id="CHEBI:30616"/>
    </ligand>
</feature>
<feature type="binding site" evidence="1">
    <location>
        <position position="215"/>
    </location>
    <ligand>
        <name>Mn(2+)</name>
        <dbReference type="ChEBI" id="CHEBI:29035"/>
    </ligand>
</feature>
<feature type="binding site" evidence="1">
    <location>
        <begin position="231"/>
        <end position="239"/>
    </location>
    <ligand>
        <name>ATP</name>
        <dbReference type="ChEBI" id="CHEBI:30616"/>
    </ligand>
</feature>
<feature type="binding site" evidence="1">
    <location>
        <position position="252"/>
    </location>
    <ligand>
        <name>Mn(2+)</name>
        <dbReference type="ChEBI" id="CHEBI:29035"/>
    </ligand>
</feature>
<feature type="binding site" evidence="1">
    <location>
        <position position="280"/>
    </location>
    <ligand>
        <name>ATP</name>
        <dbReference type="ChEBI" id="CHEBI:30616"/>
    </ligand>
</feature>
<feature type="binding site" evidence="1">
    <location>
        <position position="316"/>
    </location>
    <ligand>
        <name>ATP</name>
        <dbReference type="ChEBI" id="CHEBI:30616"/>
    </ligand>
</feature>
<feature type="binding site" evidence="1">
    <location>
        <position position="316"/>
    </location>
    <ligand>
        <name>substrate</name>
    </ligand>
</feature>
<feature type="binding site" evidence="1">
    <location>
        <position position="441"/>
    </location>
    <ligand>
        <name>ATP</name>
        <dbReference type="ChEBI" id="CHEBI:30616"/>
    </ligand>
</feature>
<gene>
    <name evidence="1" type="primary">pckA</name>
    <name type="ordered locus">Suden_1696</name>
</gene>
<evidence type="ECO:0000255" key="1">
    <source>
        <dbReference type="HAMAP-Rule" id="MF_00453"/>
    </source>
</evidence>